<accession>Q7VLN1</accession>
<protein>
    <recommendedName>
        <fullName evidence="1">GTP 3',8-cyclase</fullName>
        <ecNumber evidence="1">4.1.99.22</ecNumber>
    </recommendedName>
    <alternativeName>
        <fullName evidence="1">Molybdenum cofactor biosynthesis protein A</fullName>
    </alternativeName>
</protein>
<reference key="1">
    <citation type="submission" date="2003-06" db="EMBL/GenBank/DDBJ databases">
        <title>The complete genome sequence of Haemophilus ducreyi.</title>
        <authorList>
            <person name="Munson R.S. Jr."/>
            <person name="Ray W.C."/>
            <person name="Mahairas G."/>
            <person name="Sabo P."/>
            <person name="Mungur R."/>
            <person name="Johnson L."/>
            <person name="Nguyen D."/>
            <person name="Wang J."/>
            <person name="Forst C."/>
            <person name="Hood L."/>
        </authorList>
    </citation>
    <scope>NUCLEOTIDE SEQUENCE [LARGE SCALE GENOMIC DNA]</scope>
    <source>
        <strain>35000HP / ATCC 700724</strain>
    </source>
</reference>
<feature type="chain" id="PRO_0000152965" description="GTP 3',8-cyclase">
    <location>
        <begin position="1"/>
        <end position="340"/>
    </location>
</feature>
<feature type="domain" description="Radical SAM core" evidence="2">
    <location>
        <begin position="20"/>
        <end position="246"/>
    </location>
</feature>
<feature type="binding site" evidence="1">
    <location>
        <position position="29"/>
    </location>
    <ligand>
        <name>GTP</name>
        <dbReference type="ChEBI" id="CHEBI:37565"/>
    </ligand>
</feature>
<feature type="binding site" evidence="1">
    <location>
        <position position="36"/>
    </location>
    <ligand>
        <name>[4Fe-4S] cluster</name>
        <dbReference type="ChEBI" id="CHEBI:49883"/>
        <label>1</label>
        <note>4Fe-4S-S-AdoMet</note>
    </ligand>
</feature>
<feature type="binding site" evidence="1">
    <location>
        <position position="40"/>
    </location>
    <ligand>
        <name>[4Fe-4S] cluster</name>
        <dbReference type="ChEBI" id="CHEBI:49883"/>
        <label>1</label>
        <note>4Fe-4S-S-AdoMet</note>
    </ligand>
</feature>
<feature type="binding site" evidence="1">
    <location>
        <position position="42"/>
    </location>
    <ligand>
        <name>S-adenosyl-L-methionine</name>
        <dbReference type="ChEBI" id="CHEBI:59789"/>
    </ligand>
</feature>
<feature type="binding site" evidence="1">
    <location>
        <position position="43"/>
    </location>
    <ligand>
        <name>[4Fe-4S] cluster</name>
        <dbReference type="ChEBI" id="CHEBI:49883"/>
        <label>1</label>
        <note>4Fe-4S-S-AdoMet</note>
    </ligand>
</feature>
<feature type="binding site" evidence="1">
    <location>
        <position position="79"/>
    </location>
    <ligand>
        <name>GTP</name>
        <dbReference type="ChEBI" id="CHEBI:37565"/>
    </ligand>
</feature>
<feature type="binding site" evidence="1">
    <location>
        <position position="83"/>
    </location>
    <ligand>
        <name>S-adenosyl-L-methionine</name>
        <dbReference type="ChEBI" id="CHEBI:59789"/>
    </ligand>
</feature>
<feature type="binding site" evidence="1">
    <location>
        <position position="110"/>
    </location>
    <ligand>
        <name>GTP</name>
        <dbReference type="ChEBI" id="CHEBI:37565"/>
    </ligand>
</feature>
<feature type="binding site" evidence="1">
    <location>
        <position position="134"/>
    </location>
    <ligand>
        <name>S-adenosyl-L-methionine</name>
        <dbReference type="ChEBI" id="CHEBI:59789"/>
    </ligand>
</feature>
<feature type="binding site" evidence="1">
    <location>
        <position position="171"/>
    </location>
    <ligand>
        <name>GTP</name>
        <dbReference type="ChEBI" id="CHEBI:37565"/>
    </ligand>
</feature>
<feature type="binding site" evidence="1">
    <location>
        <position position="205"/>
    </location>
    <ligand>
        <name>S-adenosyl-L-methionine</name>
        <dbReference type="ChEBI" id="CHEBI:59789"/>
    </ligand>
</feature>
<feature type="binding site" evidence="1">
    <location>
        <position position="268"/>
    </location>
    <ligand>
        <name>[4Fe-4S] cluster</name>
        <dbReference type="ChEBI" id="CHEBI:49883"/>
        <label>2</label>
        <note>4Fe-4S-substrate</note>
    </ligand>
</feature>
<feature type="binding site" evidence="1">
    <location>
        <position position="271"/>
    </location>
    <ligand>
        <name>[4Fe-4S] cluster</name>
        <dbReference type="ChEBI" id="CHEBI:49883"/>
        <label>2</label>
        <note>4Fe-4S-substrate</note>
    </ligand>
</feature>
<feature type="binding site" evidence="1">
    <location>
        <begin position="273"/>
        <end position="275"/>
    </location>
    <ligand>
        <name>GTP</name>
        <dbReference type="ChEBI" id="CHEBI:37565"/>
    </ligand>
</feature>
<feature type="binding site" evidence="1">
    <location>
        <position position="285"/>
    </location>
    <ligand>
        <name>[4Fe-4S] cluster</name>
        <dbReference type="ChEBI" id="CHEBI:49883"/>
        <label>2</label>
        <note>4Fe-4S-substrate</note>
    </ligand>
</feature>
<evidence type="ECO:0000255" key="1">
    <source>
        <dbReference type="HAMAP-Rule" id="MF_01225"/>
    </source>
</evidence>
<evidence type="ECO:0000255" key="2">
    <source>
        <dbReference type="PROSITE-ProRule" id="PRU01266"/>
    </source>
</evidence>
<organism>
    <name type="scientific">Haemophilus ducreyi (strain 35000HP / ATCC 700724)</name>
    <dbReference type="NCBI Taxonomy" id="233412"/>
    <lineage>
        <taxon>Bacteria</taxon>
        <taxon>Pseudomonadati</taxon>
        <taxon>Pseudomonadota</taxon>
        <taxon>Gammaproteobacteria</taxon>
        <taxon>Pasteurellales</taxon>
        <taxon>Pasteurellaceae</taxon>
        <taxon>Haemophilus</taxon>
    </lineage>
</organism>
<gene>
    <name evidence="1" type="primary">moaA</name>
    <name type="ordered locus">HD_1392</name>
</gene>
<comment type="function">
    <text evidence="1">Catalyzes the cyclization of GTP to (8S)-3',8-cyclo-7,8-dihydroguanosine 5'-triphosphate.</text>
</comment>
<comment type="catalytic activity">
    <reaction evidence="1">
        <text>GTP + AH2 + S-adenosyl-L-methionine = (8S)-3',8-cyclo-7,8-dihydroguanosine 5'-triphosphate + 5'-deoxyadenosine + L-methionine + A + H(+)</text>
        <dbReference type="Rhea" id="RHEA:49576"/>
        <dbReference type="ChEBI" id="CHEBI:13193"/>
        <dbReference type="ChEBI" id="CHEBI:15378"/>
        <dbReference type="ChEBI" id="CHEBI:17319"/>
        <dbReference type="ChEBI" id="CHEBI:17499"/>
        <dbReference type="ChEBI" id="CHEBI:37565"/>
        <dbReference type="ChEBI" id="CHEBI:57844"/>
        <dbReference type="ChEBI" id="CHEBI:59789"/>
        <dbReference type="ChEBI" id="CHEBI:131766"/>
        <dbReference type="EC" id="4.1.99.22"/>
    </reaction>
</comment>
<comment type="cofactor">
    <cofactor evidence="1">
        <name>[4Fe-4S] cluster</name>
        <dbReference type="ChEBI" id="CHEBI:49883"/>
    </cofactor>
    <text evidence="1">Binds 2 [4Fe-4S] clusters. Binds 1 [4Fe-4S] cluster coordinated with 3 cysteines and an exchangeable S-adenosyl-L-methionine and 1 [4Fe-4S] cluster coordinated with 3 cysteines and the GTP-derived substrate.</text>
</comment>
<comment type="pathway">
    <text evidence="1">Cofactor biosynthesis; molybdopterin biosynthesis.</text>
</comment>
<comment type="subunit">
    <text evidence="1">Monomer and homodimer.</text>
</comment>
<comment type="similarity">
    <text evidence="1">Belongs to the radical SAM superfamily. MoaA family.</text>
</comment>
<name>MOAA_HAEDU</name>
<proteinExistence type="inferred from homology"/>
<keyword id="KW-0004">4Fe-4S</keyword>
<keyword id="KW-0342">GTP-binding</keyword>
<keyword id="KW-0408">Iron</keyword>
<keyword id="KW-0411">Iron-sulfur</keyword>
<keyword id="KW-0456">Lyase</keyword>
<keyword id="KW-0479">Metal-binding</keyword>
<keyword id="KW-0501">Molybdenum cofactor biosynthesis</keyword>
<keyword id="KW-0547">Nucleotide-binding</keyword>
<keyword id="KW-1185">Reference proteome</keyword>
<keyword id="KW-0949">S-adenosyl-L-methionine</keyword>
<dbReference type="EC" id="4.1.99.22" evidence="1"/>
<dbReference type="EMBL" id="AE017143">
    <property type="protein sequence ID" value="AAP96204.1"/>
    <property type="molecule type" value="Genomic_DNA"/>
</dbReference>
<dbReference type="RefSeq" id="WP_010945253.1">
    <property type="nucleotide sequence ID" value="NC_002940.2"/>
</dbReference>
<dbReference type="SMR" id="Q7VLN1"/>
<dbReference type="STRING" id="233412.HD_1392"/>
<dbReference type="KEGG" id="hdu:HD_1392"/>
<dbReference type="eggNOG" id="COG2896">
    <property type="taxonomic scope" value="Bacteria"/>
</dbReference>
<dbReference type="HOGENOM" id="CLU_009273_0_1_6"/>
<dbReference type="OrthoDB" id="9763993at2"/>
<dbReference type="UniPathway" id="UPA00344"/>
<dbReference type="Proteomes" id="UP000001022">
    <property type="component" value="Chromosome"/>
</dbReference>
<dbReference type="GO" id="GO:0051539">
    <property type="term" value="F:4 iron, 4 sulfur cluster binding"/>
    <property type="evidence" value="ECO:0007669"/>
    <property type="project" value="UniProtKB-UniRule"/>
</dbReference>
<dbReference type="GO" id="GO:0061799">
    <property type="term" value="F:cyclic pyranopterin monophosphate synthase activity"/>
    <property type="evidence" value="ECO:0007669"/>
    <property type="project" value="TreeGrafter"/>
</dbReference>
<dbReference type="GO" id="GO:0061798">
    <property type="term" value="F:GTP 3',8'-cyclase activity"/>
    <property type="evidence" value="ECO:0007669"/>
    <property type="project" value="UniProtKB-UniRule"/>
</dbReference>
<dbReference type="GO" id="GO:0005525">
    <property type="term" value="F:GTP binding"/>
    <property type="evidence" value="ECO:0007669"/>
    <property type="project" value="UniProtKB-UniRule"/>
</dbReference>
<dbReference type="GO" id="GO:0046872">
    <property type="term" value="F:metal ion binding"/>
    <property type="evidence" value="ECO:0007669"/>
    <property type="project" value="UniProtKB-KW"/>
</dbReference>
<dbReference type="GO" id="GO:1904047">
    <property type="term" value="F:S-adenosyl-L-methionine binding"/>
    <property type="evidence" value="ECO:0007669"/>
    <property type="project" value="UniProtKB-UniRule"/>
</dbReference>
<dbReference type="GO" id="GO:0006777">
    <property type="term" value="P:Mo-molybdopterin cofactor biosynthetic process"/>
    <property type="evidence" value="ECO:0007669"/>
    <property type="project" value="UniProtKB-UniRule"/>
</dbReference>
<dbReference type="CDD" id="cd01335">
    <property type="entry name" value="Radical_SAM"/>
    <property type="match status" value="1"/>
</dbReference>
<dbReference type="CDD" id="cd21117">
    <property type="entry name" value="Twitch_MoaA"/>
    <property type="match status" value="1"/>
</dbReference>
<dbReference type="FunFam" id="3.20.20.70:FF:000057">
    <property type="entry name" value="GTP 3',8-cyclase"/>
    <property type="match status" value="1"/>
</dbReference>
<dbReference type="Gene3D" id="3.20.20.70">
    <property type="entry name" value="Aldolase class I"/>
    <property type="match status" value="1"/>
</dbReference>
<dbReference type="HAMAP" id="MF_01225_B">
    <property type="entry name" value="MoaA_B"/>
    <property type="match status" value="1"/>
</dbReference>
<dbReference type="InterPro" id="IPR013785">
    <property type="entry name" value="Aldolase_TIM"/>
</dbReference>
<dbReference type="InterPro" id="IPR006638">
    <property type="entry name" value="Elp3/MiaA/NifB-like_rSAM"/>
</dbReference>
<dbReference type="InterPro" id="IPR013483">
    <property type="entry name" value="MoaA"/>
</dbReference>
<dbReference type="InterPro" id="IPR000385">
    <property type="entry name" value="MoaA_NifB_PqqE_Fe-S-bd_CS"/>
</dbReference>
<dbReference type="InterPro" id="IPR010505">
    <property type="entry name" value="MoaA_twitch"/>
</dbReference>
<dbReference type="InterPro" id="IPR050105">
    <property type="entry name" value="MoCo_biosynth_MoaA/MoaC"/>
</dbReference>
<dbReference type="InterPro" id="IPR007197">
    <property type="entry name" value="rSAM"/>
</dbReference>
<dbReference type="NCBIfam" id="TIGR02666">
    <property type="entry name" value="moaA"/>
    <property type="match status" value="1"/>
</dbReference>
<dbReference type="PANTHER" id="PTHR22960:SF28">
    <property type="entry name" value="GTP 3',8-CYCLASE"/>
    <property type="match status" value="1"/>
</dbReference>
<dbReference type="PANTHER" id="PTHR22960">
    <property type="entry name" value="MOLYBDOPTERIN COFACTOR SYNTHESIS PROTEIN A"/>
    <property type="match status" value="1"/>
</dbReference>
<dbReference type="Pfam" id="PF13353">
    <property type="entry name" value="Fer4_12"/>
    <property type="match status" value="1"/>
</dbReference>
<dbReference type="Pfam" id="PF06463">
    <property type="entry name" value="Mob_synth_C"/>
    <property type="match status" value="1"/>
</dbReference>
<dbReference type="Pfam" id="PF04055">
    <property type="entry name" value="Radical_SAM"/>
    <property type="match status" value="1"/>
</dbReference>
<dbReference type="SFLD" id="SFLDG01383">
    <property type="entry name" value="cyclic_pyranopterin_phosphate"/>
    <property type="match status" value="1"/>
</dbReference>
<dbReference type="SFLD" id="SFLDS00029">
    <property type="entry name" value="Radical_SAM"/>
    <property type="match status" value="1"/>
</dbReference>
<dbReference type="SMART" id="SM00729">
    <property type="entry name" value="Elp3"/>
    <property type="match status" value="1"/>
</dbReference>
<dbReference type="SUPFAM" id="SSF102114">
    <property type="entry name" value="Radical SAM enzymes"/>
    <property type="match status" value="1"/>
</dbReference>
<dbReference type="PROSITE" id="PS01305">
    <property type="entry name" value="MOAA_NIFB_PQQE"/>
    <property type="match status" value="1"/>
</dbReference>
<dbReference type="PROSITE" id="PS51918">
    <property type="entry name" value="RADICAL_SAM"/>
    <property type="match status" value="1"/>
</dbReference>
<sequence length="340" mass="38867">MQAIPIKTIGDPSLCDLVDRFQRQYTYLRLSITEVCNFRCNYCLPDGYRPPSHKQRFLNLVEIKRLARTFANLGTEKIRITGGEPTLRKDFLEIVETISQTEGIHKIALTTNGYRMERDIHLWQQVGITDLNISVDSLDPRQFQLITGENKLQSILKGIDRAFELGYKKIKVNAVLMKQYTAAELDKFLAWIKHKPIQMRFIELMETGEMDNFFKTQHLSGQTVMQRLLAEGWRLQPKAVNDGPAKVLAHPDYQGEIGLIMPYEKNFCASCNRLRVSATGKLHLCLFGEEGLDLRDLLLSDEQQPQLAARLKSALQTKREHHYLHIGNSGIRNNLASIGG</sequence>